<accession>Q99176</accession>
<accession>D6VYB7</accession>
<accession>Q02806</accession>
<gene>
    <name type="primary">SRN2</name>
    <name type="synonym">SRN10</name>
    <name type="synonym">VPS37</name>
    <name type="ordered locus">YLR119W</name>
    <name type="ORF">L2958</name>
    <name type="ORF">L9233.5</name>
</gene>
<organism>
    <name type="scientific">Saccharomyces cerevisiae (strain ATCC 204508 / S288c)</name>
    <name type="common">Baker's yeast</name>
    <dbReference type="NCBI Taxonomy" id="559292"/>
    <lineage>
        <taxon>Eukaryota</taxon>
        <taxon>Fungi</taxon>
        <taxon>Dikarya</taxon>
        <taxon>Ascomycota</taxon>
        <taxon>Saccharomycotina</taxon>
        <taxon>Saccharomycetes</taxon>
        <taxon>Saccharomycetales</taxon>
        <taxon>Saccharomycetaceae</taxon>
        <taxon>Saccharomyces</taxon>
    </lineage>
</organism>
<name>SRN2_YEAST</name>
<feature type="chain" id="PRO_0000072191" description="Protein SRN2">
    <location>
        <begin position="1"/>
        <end position="213"/>
    </location>
</feature>
<feature type="domain" description="VPS37 C-terminal" evidence="1">
    <location>
        <begin position="128"/>
        <end position="213"/>
    </location>
</feature>
<feature type="mutagenesis site" description="Defective in ESCRT-I cargo sorting." evidence="4">
    <original>L</original>
    <variation>D</variation>
    <location>
        <position position="67"/>
    </location>
</feature>
<feature type="mutagenesis site" description="Defective in ESCRT-I cargo sorting." evidence="4">
    <original>L</original>
    <variation>D</variation>
    <location>
        <position position="75"/>
    </location>
</feature>
<feature type="mutagenesis site" description="Defective in ESCRT-I cargo sorting." evidence="4">
    <original>V</original>
    <variation>D</variation>
    <location>
        <position position="79"/>
    </location>
</feature>
<feature type="mutagenesis site" description="Defective in ESCRT-I cargo sorting; when associated with D-99." evidence="4">
    <original>F</original>
    <variation>D</variation>
    <location>
        <position position="88"/>
    </location>
</feature>
<feature type="mutagenesis site" description="Defective in ESCRT-I cargo sorting; when associated with D-102." evidence="4">
    <original>I</original>
    <variation>D</variation>
    <location>
        <position position="92"/>
    </location>
</feature>
<feature type="mutagenesis site" description="Defective in ESCRT-I cargo sorting; when associated with D-99." evidence="4">
    <original>F</original>
    <variation>D</variation>
    <location>
        <position position="95"/>
    </location>
</feature>
<feature type="mutagenesis site" description="Defective in ESCRT-I cargo sorting; when associated with D-88." evidence="4">
    <original>F</original>
    <variation>D</variation>
    <location>
        <position position="99"/>
    </location>
</feature>
<feature type="mutagenesis site" description="Defective in ESCRT-I cargo sorting; when associated with D-95." evidence="4">
    <original>F</original>
    <variation>D</variation>
    <location>
        <position position="99"/>
    </location>
</feature>
<feature type="mutagenesis site" description="Defective in ESCRT-I cargo sorting; when associated with D-92." evidence="4">
    <original>L</original>
    <variation>D</variation>
    <location>
        <position position="102"/>
    </location>
</feature>
<feature type="mutagenesis site" description="Abolishes ESCRT-I complex assembly; class E phenotype (malformed late MVB); when associated with R-185." evidence="3">
    <original>L</original>
    <variation>R</variation>
    <location>
        <position position="181"/>
    </location>
</feature>
<feature type="mutagenesis site" description="Abolishes ESCRT-I complex assembly; class E phenotype (malformed late MVB); when associated with R-181." evidence="3">
    <original>I</original>
    <variation>R</variation>
    <location>
        <position position="185"/>
    </location>
</feature>
<feature type="sequence conflict" description="In Ref. 1; AAB88577." evidence="6" ref="1">
    <original>G</original>
    <variation>E</variation>
    <location>
        <position position="90"/>
    </location>
</feature>
<feature type="sequence conflict" description="In Ref. 1; AAB88577." evidence="6" ref="1">
    <original>E</original>
    <variation>D</variation>
    <location>
        <position position="140"/>
    </location>
</feature>
<feature type="sequence conflict" description="In Ref. 1; AAB88577." evidence="6" ref="1">
    <original>K</original>
    <variation>E</variation>
    <location>
        <position position="143"/>
    </location>
</feature>
<feature type="helix" evidence="8">
    <location>
        <begin position="23"/>
        <end position="33"/>
    </location>
</feature>
<feature type="helix" evidence="8">
    <location>
        <begin position="55"/>
        <end position="57"/>
    </location>
</feature>
<feature type="helix" evidence="8">
    <location>
        <begin position="62"/>
        <end position="70"/>
    </location>
</feature>
<feature type="helix" evidence="8">
    <location>
        <begin position="72"/>
        <end position="78"/>
    </location>
</feature>
<feature type="helix" evidence="8">
    <location>
        <begin position="79"/>
        <end position="82"/>
    </location>
</feature>
<feature type="helix" evidence="8">
    <location>
        <begin position="86"/>
        <end position="143"/>
    </location>
</feature>
<feature type="strand" evidence="8">
    <location>
        <begin position="144"/>
        <end position="146"/>
    </location>
</feature>
<feature type="helix" evidence="8">
    <location>
        <begin position="147"/>
        <end position="170"/>
    </location>
</feature>
<feature type="helix" evidence="8">
    <location>
        <begin position="178"/>
        <end position="205"/>
    </location>
</feature>
<reference key="1">
    <citation type="journal article" date="1998" name="Mol. Gen. Genet.">
        <title>Isolation of an extragenic suppressor of the rna1-1 mutation in Saccharomyces cerevisiae.</title>
        <authorList>
            <person name="Hong S.J."/>
            <person name="Yi Y.S."/>
            <person name="Koh S.S."/>
            <person name="Park O.K."/>
            <person name="Kang H.S."/>
        </authorList>
    </citation>
    <scope>NUCLEOTIDE SEQUENCE [GENOMIC DNA]</scope>
    <scope>INTERACTION WITH RNA1</scope>
    <scope>SUBCELLULAR LOCATION</scope>
</reference>
<reference key="2">
    <citation type="journal article" date="1997" name="Yeast">
        <title>Sequence analysis of a 37.6 kbp cosmid clone from the right arm of Saccharomyces cerevisiae chromosome XII, carrying YAP3, HOG1, SNR6, tRNA-Arg3 and 23 new open reading frames, among which several homologies to proteins involved in cell division control and to mammalian growth factors and other animal proteins are found.</title>
        <authorList>
            <person name="Verhasselt P."/>
            <person name="Volckaert G."/>
        </authorList>
    </citation>
    <scope>NUCLEOTIDE SEQUENCE [GENOMIC DNA]</scope>
    <source>
        <strain>ATCC 90840 / EAY235 / FY23</strain>
    </source>
</reference>
<reference key="3">
    <citation type="journal article" date="1997" name="Nature">
        <title>The nucleotide sequence of Saccharomyces cerevisiae chromosome XII.</title>
        <authorList>
            <person name="Johnston M."/>
            <person name="Hillier L.W."/>
            <person name="Riles L."/>
            <person name="Albermann K."/>
            <person name="Andre B."/>
            <person name="Ansorge W."/>
            <person name="Benes V."/>
            <person name="Brueckner M."/>
            <person name="Delius H."/>
            <person name="Dubois E."/>
            <person name="Duesterhoeft A."/>
            <person name="Entian K.-D."/>
            <person name="Floeth M."/>
            <person name="Goffeau A."/>
            <person name="Hebling U."/>
            <person name="Heumann K."/>
            <person name="Heuss-Neitzel D."/>
            <person name="Hilbert H."/>
            <person name="Hilger F."/>
            <person name="Kleine K."/>
            <person name="Koetter P."/>
            <person name="Louis E.J."/>
            <person name="Messenguy F."/>
            <person name="Mewes H.-W."/>
            <person name="Miosga T."/>
            <person name="Moestl D."/>
            <person name="Mueller-Auer S."/>
            <person name="Nentwich U."/>
            <person name="Obermaier B."/>
            <person name="Piravandi E."/>
            <person name="Pohl T.M."/>
            <person name="Portetelle D."/>
            <person name="Purnelle B."/>
            <person name="Rechmann S."/>
            <person name="Rieger M."/>
            <person name="Rinke M."/>
            <person name="Rose M."/>
            <person name="Scharfe M."/>
            <person name="Scherens B."/>
            <person name="Scholler P."/>
            <person name="Schwager C."/>
            <person name="Schwarz S."/>
            <person name="Underwood A.P."/>
            <person name="Urrestarazu L.A."/>
            <person name="Vandenbol M."/>
            <person name="Verhasselt P."/>
            <person name="Vierendeels F."/>
            <person name="Voet M."/>
            <person name="Volckaert G."/>
            <person name="Voss H."/>
            <person name="Wambutt R."/>
            <person name="Wedler E."/>
            <person name="Wedler H."/>
            <person name="Zimmermann F.K."/>
            <person name="Zollner A."/>
            <person name="Hani J."/>
            <person name="Hoheisel J.D."/>
        </authorList>
    </citation>
    <scope>NUCLEOTIDE SEQUENCE [LARGE SCALE GENOMIC DNA]</scope>
    <source>
        <strain>ATCC 204508 / S288c</strain>
    </source>
</reference>
<reference key="4">
    <citation type="journal article" date="2014" name="G3 (Bethesda)">
        <title>The reference genome sequence of Saccharomyces cerevisiae: Then and now.</title>
        <authorList>
            <person name="Engel S.R."/>
            <person name="Dietrich F.S."/>
            <person name="Fisk D.G."/>
            <person name="Binkley G."/>
            <person name="Balakrishnan R."/>
            <person name="Costanzo M.C."/>
            <person name="Dwight S.S."/>
            <person name="Hitz B.C."/>
            <person name="Karra K."/>
            <person name="Nash R.S."/>
            <person name="Weng S."/>
            <person name="Wong E.D."/>
            <person name="Lloyd P."/>
            <person name="Skrzypek M.S."/>
            <person name="Miyasato S.R."/>
            <person name="Simison M."/>
            <person name="Cherry J.M."/>
        </authorList>
    </citation>
    <scope>GENOME REANNOTATION</scope>
    <source>
        <strain>ATCC 204508 / S288c</strain>
    </source>
</reference>
<reference key="5">
    <citation type="journal article" date="2006" name="Cell">
        <title>ESCRT-I core and ESCRT-II GLUE domain structures reveal role for GLUE in linking to ESCRT-I and membranes.</title>
        <authorList>
            <person name="Teo H."/>
            <person name="Gill D.J."/>
            <person name="Sun J."/>
            <person name="Perisic O."/>
            <person name="Veprintsev D.B."/>
            <person name="Vallis Y."/>
            <person name="Emr S.D."/>
            <person name="Williams R.L."/>
        </authorList>
    </citation>
    <scope>X-RAY CRYSTALLOGRAPHY (3.6 ANGSTROMS) OF 130-213 IN COMPLEX WITH STP22 AND VPS28</scope>
</reference>
<reference key="6">
    <citation type="journal article" date="2006" name="Cell">
        <title>Structural and functional organization of the ESCRT-I trafficking complex.</title>
        <authorList>
            <person name="Kostelansky M.S."/>
            <person name="Sun J."/>
            <person name="Lee S."/>
            <person name="Kim J."/>
            <person name="Ghirlando R."/>
            <person name="Hierro A."/>
            <person name="Emr S.D."/>
            <person name="Hurley J.H."/>
        </authorList>
    </citation>
    <scope>X-RAY CRYSTALLOGRAPHY (2.8 ANGSTROMS) OF 132-213 IN COMPLEX WITH STP22 AND VPS28</scope>
    <scope>MUTAGENESIS OF LEU-181 AND ILE-185</scope>
</reference>
<reference key="7">
    <citation type="journal article" date="2007" name="Cell">
        <title>Molecular architecture and functional model of the complete yeast ESCRT-I heterotetramer.</title>
        <authorList>
            <person name="Kostelansky M.S."/>
            <person name="Schluter C."/>
            <person name="Tam Y.Y."/>
            <person name="Lee S."/>
            <person name="Ghirlando R."/>
            <person name="Beach B."/>
            <person name="Conibear E."/>
            <person name="Hurley J.H."/>
        </authorList>
    </citation>
    <scope>X-RAY CRYSTALLOGRAPHY (2.7 ANGSTROMS) OF 22-213</scope>
    <scope>COMPOSITION OF THE ESCRT-I COMPLEX</scope>
    <scope>INTERACTION WITH STP22 AND MVB12</scope>
    <scope>MUTAGENESIS OF LEU-67; LEU-75; VAL-79; PHE-88; ILE-92; PHE-95; PHE-99 AND LEU-102</scope>
</reference>
<comment type="function">
    <text>Component of the ESCRT-I complex, a regulator of vesicular trafficking process. Required for normal endocytic and biosynthetic traffic to the yeast vacuole.</text>
</comment>
<comment type="subunit">
    <text evidence="2 3 4 5">Component of the ESCRT-I complex (endosomal sorting complex required for transport I) which consists of STP22, VPS28, SRN2 and MVB12 in a 1:1:1:1 stoichiometry. Interacts with STP22 and MVB12.</text>
</comment>
<comment type="interaction">
    <interactant intactId="EBI-18076">
        <id>Q99176</id>
    </interactant>
    <interactant intactId="EBI-23478">
        <id>P42939</id>
        <label>MVB12</label>
    </interactant>
    <organismsDiffer>false</organismsDiffer>
    <experiments>10</experiments>
</comment>
<comment type="interaction">
    <interactant intactId="EBI-18076">
        <id>Q99176</id>
    </interactant>
    <interactant intactId="EBI-411625">
        <id>P25604</id>
        <label>STP22</label>
    </interactant>
    <organismsDiffer>false</organismsDiffer>
    <experiments>9</experiments>
</comment>
<comment type="interaction">
    <interactant intactId="EBI-18076">
        <id>Q99176</id>
    </interactant>
    <interactant intactId="EBI-20387">
        <id>Q02767</id>
        <label>VPS28</label>
    </interactant>
    <organismsDiffer>false</organismsDiffer>
    <experiments>5</experiments>
</comment>
<comment type="subcellular location">
    <subcellularLocation>
        <location evidence="5">Cytoplasm</location>
    </subcellularLocation>
    <subcellularLocation>
        <location evidence="7">Endosome</location>
    </subcellularLocation>
    <subcellularLocation>
        <location evidence="7">Late endosome membrane</location>
        <topology evidence="7">Peripheral membrane protein</topology>
    </subcellularLocation>
</comment>
<comment type="similarity">
    <text evidence="6">Belongs to the VPS37 family.</text>
</comment>
<comment type="sequence caution" evidence="6">
    <conflict type="erroneous initiation">
        <sequence resource="EMBL-CDS" id="AAB88577"/>
    </conflict>
</comment>
<dbReference type="EMBL" id="U40562">
    <property type="protein sequence ID" value="AAB88577.1"/>
    <property type="status" value="ALT_INIT"/>
    <property type="molecule type" value="Genomic_DNA"/>
</dbReference>
<dbReference type="EMBL" id="X89514">
    <property type="protein sequence ID" value="CAA61698.1"/>
    <property type="molecule type" value="Genomic_DNA"/>
</dbReference>
<dbReference type="EMBL" id="U53877">
    <property type="protein sequence ID" value="AAB82366.1"/>
    <property type="molecule type" value="Genomic_DNA"/>
</dbReference>
<dbReference type="EMBL" id="Z73291">
    <property type="protein sequence ID" value="CAA97687.1"/>
    <property type="molecule type" value="Genomic_DNA"/>
</dbReference>
<dbReference type="EMBL" id="BK006945">
    <property type="protein sequence ID" value="DAA09433.1"/>
    <property type="molecule type" value="Genomic_DNA"/>
</dbReference>
<dbReference type="PIR" id="S64956">
    <property type="entry name" value="S64956"/>
</dbReference>
<dbReference type="RefSeq" id="NP_013220.1">
    <property type="nucleotide sequence ID" value="NM_001182006.1"/>
</dbReference>
<dbReference type="PDB" id="2CAZ">
    <property type="method" value="X-ray"/>
    <property type="resolution" value="3.60 A"/>
    <property type="chains" value="C/F=130-213"/>
</dbReference>
<dbReference type="PDB" id="2F66">
    <property type="method" value="X-ray"/>
    <property type="resolution" value="2.80 A"/>
    <property type="chains" value="C/F=132-213"/>
</dbReference>
<dbReference type="PDB" id="2P22">
    <property type="method" value="X-ray"/>
    <property type="resolution" value="2.70 A"/>
    <property type="chains" value="C=22-213"/>
</dbReference>
<dbReference type="PDBsum" id="2CAZ"/>
<dbReference type="PDBsum" id="2F66"/>
<dbReference type="PDBsum" id="2P22"/>
<dbReference type="SMR" id="Q99176"/>
<dbReference type="BioGRID" id="31391">
    <property type="interactions" value="603"/>
</dbReference>
<dbReference type="ComplexPortal" id="CPX-940">
    <property type="entry name" value="ESCRT-I complex"/>
</dbReference>
<dbReference type="DIP" id="DIP-2130N"/>
<dbReference type="FunCoup" id="Q99176">
    <property type="interactions" value="58"/>
</dbReference>
<dbReference type="IntAct" id="Q99176">
    <property type="interactions" value="4"/>
</dbReference>
<dbReference type="MINT" id="Q99176"/>
<dbReference type="STRING" id="4932.YLR119W"/>
<dbReference type="TCDB" id="3.A.31.1.1">
    <property type="family name" value="the endosomal sorting complexes required for transport iii (escrt-iii) family"/>
</dbReference>
<dbReference type="iPTMnet" id="Q99176"/>
<dbReference type="PaxDb" id="4932-YLR119W"/>
<dbReference type="PeptideAtlas" id="Q99176"/>
<dbReference type="EnsemblFungi" id="YLR119W_mRNA">
    <property type="protein sequence ID" value="YLR119W"/>
    <property type="gene ID" value="YLR119W"/>
</dbReference>
<dbReference type="GeneID" id="850810"/>
<dbReference type="KEGG" id="sce:YLR119W"/>
<dbReference type="AGR" id="SGD:S000004109"/>
<dbReference type="SGD" id="S000004109">
    <property type="gene designation" value="SRN2"/>
</dbReference>
<dbReference type="VEuPathDB" id="FungiDB:YLR119W"/>
<dbReference type="eggNOG" id="ENOG502S6GM">
    <property type="taxonomic scope" value="Eukaryota"/>
</dbReference>
<dbReference type="HOGENOM" id="CLU_109465_0_0_1"/>
<dbReference type="InParanoid" id="Q99176"/>
<dbReference type="OMA" id="YVTKFHP"/>
<dbReference type="OrthoDB" id="4035847at2759"/>
<dbReference type="BioCyc" id="YEAST:G3O-32264-MONOMER"/>
<dbReference type="Reactome" id="R-SCE-917729">
    <property type="pathway name" value="Endosomal Sorting Complex Required For Transport (ESCRT)"/>
</dbReference>
<dbReference type="BioGRID-ORCS" id="850810">
    <property type="hits" value="0 hits in 10 CRISPR screens"/>
</dbReference>
<dbReference type="EvolutionaryTrace" id="Q99176"/>
<dbReference type="PRO" id="PR:Q99176"/>
<dbReference type="Proteomes" id="UP000002311">
    <property type="component" value="Chromosome XII"/>
</dbReference>
<dbReference type="RNAct" id="Q99176">
    <property type="molecule type" value="protein"/>
</dbReference>
<dbReference type="GO" id="GO:0005768">
    <property type="term" value="C:endosome"/>
    <property type="evidence" value="ECO:0000314"/>
    <property type="project" value="SGD"/>
</dbReference>
<dbReference type="GO" id="GO:0000813">
    <property type="term" value="C:ESCRT I complex"/>
    <property type="evidence" value="ECO:0000314"/>
    <property type="project" value="SGD"/>
</dbReference>
<dbReference type="GO" id="GO:0031902">
    <property type="term" value="C:late endosome membrane"/>
    <property type="evidence" value="ECO:0007669"/>
    <property type="project" value="UniProtKB-SubCell"/>
</dbReference>
<dbReference type="GO" id="GO:0005634">
    <property type="term" value="C:nucleus"/>
    <property type="evidence" value="ECO:0007005"/>
    <property type="project" value="SGD"/>
</dbReference>
<dbReference type="GO" id="GO:1904669">
    <property type="term" value="P:ATP export"/>
    <property type="evidence" value="ECO:0000315"/>
    <property type="project" value="SGD"/>
</dbReference>
<dbReference type="GO" id="GO:0032509">
    <property type="term" value="P:endosome transport via multivesicular body sorting pathway"/>
    <property type="evidence" value="ECO:0007669"/>
    <property type="project" value="InterPro"/>
</dbReference>
<dbReference type="GO" id="GO:0006612">
    <property type="term" value="P:protein targeting to membrane"/>
    <property type="evidence" value="ECO:0000315"/>
    <property type="project" value="SGD"/>
</dbReference>
<dbReference type="GO" id="GO:0006623">
    <property type="term" value="P:protein targeting to vacuole"/>
    <property type="evidence" value="ECO:0000315"/>
    <property type="project" value="SGD"/>
</dbReference>
<dbReference type="GO" id="GO:0043162">
    <property type="term" value="P:ubiquitin-dependent protein catabolic process via the multivesicular body sorting pathway"/>
    <property type="evidence" value="ECO:0000314"/>
    <property type="project" value="ComplexPortal"/>
</dbReference>
<dbReference type="FunFam" id="1.10.287.660:FF:000011">
    <property type="entry name" value="Protein SRN2"/>
    <property type="match status" value="1"/>
</dbReference>
<dbReference type="Gene3D" id="1.10.287.660">
    <property type="entry name" value="Helix hairpin bin"/>
    <property type="match status" value="1"/>
</dbReference>
<dbReference type="InterPro" id="IPR017435">
    <property type="entry name" value="ESCRT-1_cplx_Vps37_fungi"/>
</dbReference>
<dbReference type="InterPro" id="IPR037202">
    <property type="entry name" value="ESCRT_assembly_dom"/>
</dbReference>
<dbReference type="InterPro" id="IPR029012">
    <property type="entry name" value="Helix_hairpin_bin_sf"/>
</dbReference>
<dbReference type="InterPro" id="IPR009851">
    <property type="entry name" value="Mod_r"/>
</dbReference>
<dbReference type="Pfam" id="PF07200">
    <property type="entry name" value="Mod_r"/>
    <property type="match status" value="1"/>
</dbReference>
<dbReference type="PIRSF" id="PIRSF038214">
    <property type="entry name" value="ESCRT1_Vps37_fungi"/>
    <property type="match status" value="1"/>
</dbReference>
<dbReference type="SUPFAM" id="SSF140111">
    <property type="entry name" value="Endosomal sorting complex assembly domain"/>
    <property type="match status" value="1"/>
</dbReference>
<dbReference type="PROSITE" id="PS51314">
    <property type="entry name" value="VPS37_C"/>
    <property type="match status" value="1"/>
</dbReference>
<protein>
    <recommendedName>
        <fullName>Protein SRN2</fullName>
    </recommendedName>
    <alternativeName>
        <fullName>ESCRT-I complex subunit VPS37</fullName>
    </alternativeName>
    <alternativeName>
        <fullName>Vacuolar protein sorting-associated protein 37</fullName>
    </alternativeName>
</protein>
<keyword id="KW-0002">3D-structure</keyword>
<keyword id="KW-0963">Cytoplasm</keyword>
<keyword id="KW-0967">Endosome</keyword>
<keyword id="KW-0472">Membrane</keyword>
<keyword id="KW-0653">Protein transport</keyword>
<keyword id="KW-1185">Reference proteome</keyword>
<keyword id="KW-0813">Transport</keyword>
<sequence length="213" mass="25101">MKVKATKLRIKQRRKNKGLNISRLDIIRAEMDVVPSPGLPEKVNEKSKNIPLPEGINLLSSKEIIDLIQTHRHQLELYVTKFNPLTDFAGKIHAFRDQFKQLEENFEDLHEQKDKVQALLENCRILESKYVASWQDYHSEFSKKYGDIALKKKLEQNTKKLDEESSQLETTTRSIDSADDLDQFIKNYLDIRTQYHLRREKLATWDKQGNLKY</sequence>
<proteinExistence type="evidence at protein level"/>
<evidence type="ECO:0000255" key="1">
    <source>
        <dbReference type="PROSITE-ProRule" id="PRU00646"/>
    </source>
</evidence>
<evidence type="ECO:0000269" key="2">
    <source>
    </source>
</evidence>
<evidence type="ECO:0000269" key="3">
    <source>
    </source>
</evidence>
<evidence type="ECO:0000269" key="4">
    <source>
    </source>
</evidence>
<evidence type="ECO:0000269" key="5">
    <source>
    </source>
</evidence>
<evidence type="ECO:0000305" key="6"/>
<evidence type="ECO:0000305" key="7">
    <source>
    </source>
</evidence>
<evidence type="ECO:0007829" key="8">
    <source>
        <dbReference type="PDB" id="2P22"/>
    </source>
</evidence>